<dbReference type="EC" id="2.7.4.9" evidence="1"/>
<dbReference type="EMBL" id="CP000285">
    <property type="protein sequence ID" value="ABE58959.1"/>
    <property type="molecule type" value="Genomic_DNA"/>
</dbReference>
<dbReference type="RefSeq" id="WP_011506905.1">
    <property type="nucleotide sequence ID" value="NC_007963.1"/>
</dbReference>
<dbReference type="SMR" id="Q1QX49"/>
<dbReference type="STRING" id="290398.Csal_1606"/>
<dbReference type="GeneID" id="95334337"/>
<dbReference type="KEGG" id="csa:Csal_1606"/>
<dbReference type="eggNOG" id="COG0125">
    <property type="taxonomic scope" value="Bacteria"/>
</dbReference>
<dbReference type="HOGENOM" id="CLU_049131_0_2_6"/>
<dbReference type="OrthoDB" id="9774907at2"/>
<dbReference type="Proteomes" id="UP000000239">
    <property type="component" value="Chromosome"/>
</dbReference>
<dbReference type="GO" id="GO:0005829">
    <property type="term" value="C:cytosol"/>
    <property type="evidence" value="ECO:0007669"/>
    <property type="project" value="TreeGrafter"/>
</dbReference>
<dbReference type="GO" id="GO:0005524">
    <property type="term" value="F:ATP binding"/>
    <property type="evidence" value="ECO:0007669"/>
    <property type="project" value="UniProtKB-UniRule"/>
</dbReference>
<dbReference type="GO" id="GO:0004798">
    <property type="term" value="F:dTMP kinase activity"/>
    <property type="evidence" value="ECO:0007669"/>
    <property type="project" value="UniProtKB-UniRule"/>
</dbReference>
<dbReference type="GO" id="GO:0006233">
    <property type="term" value="P:dTDP biosynthetic process"/>
    <property type="evidence" value="ECO:0007669"/>
    <property type="project" value="InterPro"/>
</dbReference>
<dbReference type="GO" id="GO:0006235">
    <property type="term" value="P:dTTP biosynthetic process"/>
    <property type="evidence" value="ECO:0007669"/>
    <property type="project" value="UniProtKB-UniRule"/>
</dbReference>
<dbReference type="GO" id="GO:0006227">
    <property type="term" value="P:dUDP biosynthetic process"/>
    <property type="evidence" value="ECO:0007669"/>
    <property type="project" value="TreeGrafter"/>
</dbReference>
<dbReference type="CDD" id="cd01672">
    <property type="entry name" value="TMPK"/>
    <property type="match status" value="1"/>
</dbReference>
<dbReference type="FunFam" id="3.40.50.300:FF:000225">
    <property type="entry name" value="Thymidylate kinase"/>
    <property type="match status" value="1"/>
</dbReference>
<dbReference type="Gene3D" id="3.40.50.300">
    <property type="entry name" value="P-loop containing nucleotide triphosphate hydrolases"/>
    <property type="match status" value="1"/>
</dbReference>
<dbReference type="HAMAP" id="MF_00165">
    <property type="entry name" value="Thymidylate_kinase"/>
    <property type="match status" value="1"/>
</dbReference>
<dbReference type="InterPro" id="IPR027417">
    <property type="entry name" value="P-loop_NTPase"/>
</dbReference>
<dbReference type="InterPro" id="IPR039430">
    <property type="entry name" value="Thymidylate_kin-like_dom"/>
</dbReference>
<dbReference type="InterPro" id="IPR018094">
    <property type="entry name" value="Thymidylate_kinase"/>
</dbReference>
<dbReference type="NCBIfam" id="TIGR00041">
    <property type="entry name" value="DTMP_kinase"/>
    <property type="match status" value="1"/>
</dbReference>
<dbReference type="PANTHER" id="PTHR10344">
    <property type="entry name" value="THYMIDYLATE KINASE"/>
    <property type="match status" value="1"/>
</dbReference>
<dbReference type="PANTHER" id="PTHR10344:SF4">
    <property type="entry name" value="UMP-CMP KINASE 2, MITOCHONDRIAL"/>
    <property type="match status" value="1"/>
</dbReference>
<dbReference type="Pfam" id="PF02223">
    <property type="entry name" value="Thymidylate_kin"/>
    <property type="match status" value="1"/>
</dbReference>
<dbReference type="SUPFAM" id="SSF52540">
    <property type="entry name" value="P-loop containing nucleoside triphosphate hydrolases"/>
    <property type="match status" value="1"/>
</dbReference>
<name>KTHY_CHRSD</name>
<reference key="1">
    <citation type="journal article" date="2011" name="Stand. Genomic Sci.">
        <title>Complete genome sequence of the halophilic and highly halotolerant Chromohalobacter salexigens type strain (1H11(T)).</title>
        <authorList>
            <person name="Copeland A."/>
            <person name="O'Connor K."/>
            <person name="Lucas S."/>
            <person name="Lapidus A."/>
            <person name="Berry K.W."/>
            <person name="Detter J.C."/>
            <person name="Del Rio T.G."/>
            <person name="Hammon N."/>
            <person name="Dalin E."/>
            <person name="Tice H."/>
            <person name="Pitluck S."/>
            <person name="Bruce D."/>
            <person name="Goodwin L."/>
            <person name="Han C."/>
            <person name="Tapia R."/>
            <person name="Saunders E."/>
            <person name="Schmutz J."/>
            <person name="Brettin T."/>
            <person name="Larimer F."/>
            <person name="Land M."/>
            <person name="Hauser L."/>
            <person name="Vargas C."/>
            <person name="Nieto J.J."/>
            <person name="Kyrpides N.C."/>
            <person name="Ivanova N."/>
            <person name="Goker M."/>
            <person name="Klenk H.P."/>
            <person name="Csonka L.N."/>
            <person name="Woyke T."/>
        </authorList>
    </citation>
    <scope>NUCLEOTIDE SEQUENCE [LARGE SCALE GENOMIC DNA]</scope>
    <source>
        <strain>ATCC BAA-138 / DSM 3043 / CIP 106854 / NCIMB 13768 / 1H11</strain>
    </source>
</reference>
<keyword id="KW-0067">ATP-binding</keyword>
<keyword id="KW-0418">Kinase</keyword>
<keyword id="KW-0545">Nucleotide biosynthesis</keyword>
<keyword id="KW-0547">Nucleotide-binding</keyword>
<keyword id="KW-1185">Reference proteome</keyword>
<keyword id="KW-0808">Transferase</keyword>
<feature type="chain" id="PRO_1000023177" description="Thymidylate kinase">
    <location>
        <begin position="1"/>
        <end position="212"/>
    </location>
</feature>
<feature type="binding site" evidence="1">
    <location>
        <begin position="11"/>
        <end position="18"/>
    </location>
    <ligand>
        <name>ATP</name>
        <dbReference type="ChEBI" id="CHEBI:30616"/>
    </ligand>
</feature>
<proteinExistence type="inferred from homology"/>
<gene>
    <name evidence="1" type="primary">tmk</name>
    <name type="ordered locus">Csal_1606</name>
</gene>
<comment type="function">
    <text evidence="1">Phosphorylation of dTMP to form dTDP in both de novo and salvage pathways of dTTP synthesis.</text>
</comment>
<comment type="catalytic activity">
    <reaction evidence="1">
        <text>dTMP + ATP = dTDP + ADP</text>
        <dbReference type="Rhea" id="RHEA:13517"/>
        <dbReference type="ChEBI" id="CHEBI:30616"/>
        <dbReference type="ChEBI" id="CHEBI:58369"/>
        <dbReference type="ChEBI" id="CHEBI:63528"/>
        <dbReference type="ChEBI" id="CHEBI:456216"/>
        <dbReference type="EC" id="2.7.4.9"/>
    </reaction>
</comment>
<comment type="similarity">
    <text evidence="1">Belongs to the thymidylate kinase family.</text>
</comment>
<evidence type="ECO:0000255" key="1">
    <source>
        <dbReference type="HAMAP-Rule" id="MF_00165"/>
    </source>
</evidence>
<organism>
    <name type="scientific">Chromohalobacter salexigens (strain ATCC BAA-138 / DSM 3043 / CIP 106854 / NCIMB 13768 / 1H11)</name>
    <dbReference type="NCBI Taxonomy" id="290398"/>
    <lineage>
        <taxon>Bacteria</taxon>
        <taxon>Pseudomonadati</taxon>
        <taxon>Pseudomonadota</taxon>
        <taxon>Gammaproteobacteria</taxon>
        <taxon>Oceanospirillales</taxon>
        <taxon>Halomonadaceae</taxon>
        <taxon>Chromohalobacter</taxon>
    </lineage>
</organism>
<sequence length="212" mass="23342">MTPGRFITLEGGEGVGKSTNVAFVCDWLSARGIEVVRTREPGGTPRAEAIRELLLDPAPQEPLDETAELLLMFAARAQHLAARIRPALARGAWVVCDRFTDATFAYQGGGRGLDETRIATLEALVQQGLQPDLTLLLDMPVEAAQRRVERRGIERDRFERERGAFFNAVRESYLARAAQAPTRFAVIDADRSLEAVQASIAAHLTERLASWS</sequence>
<accession>Q1QX49</accession>
<protein>
    <recommendedName>
        <fullName evidence="1">Thymidylate kinase</fullName>
        <ecNumber evidence="1">2.7.4.9</ecNumber>
    </recommendedName>
    <alternativeName>
        <fullName evidence="1">dTMP kinase</fullName>
    </alternativeName>
</protein>